<proteinExistence type="inferred from homology"/>
<name>APT_CITK8</name>
<evidence type="ECO:0000255" key="1">
    <source>
        <dbReference type="HAMAP-Rule" id="MF_00004"/>
    </source>
</evidence>
<reference key="1">
    <citation type="submission" date="2007-08" db="EMBL/GenBank/DDBJ databases">
        <authorList>
            <consortium name="The Citrobacter koseri Genome Sequencing Project"/>
            <person name="McClelland M."/>
            <person name="Sanderson E.K."/>
            <person name="Porwollik S."/>
            <person name="Spieth J."/>
            <person name="Clifton W.S."/>
            <person name="Latreille P."/>
            <person name="Courtney L."/>
            <person name="Wang C."/>
            <person name="Pepin K."/>
            <person name="Bhonagiri V."/>
            <person name="Nash W."/>
            <person name="Johnson M."/>
            <person name="Thiruvilangam P."/>
            <person name="Wilson R."/>
        </authorList>
    </citation>
    <scope>NUCLEOTIDE SEQUENCE [LARGE SCALE GENOMIC DNA]</scope>
    <source>
        <strain>ATCC BAA-895 / CDC 4225-83 / SGSC4696</strain>
    </source>
</reference>
<sequence length="183" mass="19937">MTATAQQLEFLKNSIKSIHDYPKPGILFRDVTSLLEDPKAYALSIELLVERYKNAGITKVVGTEARGFLFGAPVALGLGVGFVPVRKPRKLPRETIAESYELEYGTDQLEIHVDAIKPGDKVLVVDDLLATGGTIEATVKLIRRLGGEVTDAAFIINLFDLGGEQRLAKQGITCYSLVPFPGH</sequence>
<keyword id="KW-0963">Cytoplasm</keyword>
<keyword id="KW-0328">Glycosyltransferase</keyword>
<keyword id="KW-0660">Purine salvage</keyword>
<keyword id="KW-1185">Reference proteome</keyword>
<keyword id="KW-0808">Transferase</keyword>
<organism>
    <name type="scientific">Citrobacter koseri (strain ATCC BAA-895 / CDC 4225-83 / SGSC4696)</name>
    <dbReference type="NCBI Taxonomy" id="290338"/>
    <lineage>
        <taxon>Bacteria</taxon>
        <taxon>Pseudomonadati</taxon>
        <taxon>Pseudomonadota</taxon>
        <taxon>Gammaproteobacteria</taxon>
        <taxon>Enterobacterales</taxon>
        <taxon>Enterobacteriaceae</taxon>
        <taxon>Citrobacter</taxon>
    </lineage>
</organism>
<feature type="chain" id="PRO_1000000274" description="Adenine phosphoribosyltransferase">
    <location>
        <begin position="1"/>
        <end position="183"/>
    </location>
</feature>
<accession>A8AJX4</accession>
<comment type="function">
    <text evidence="1">Catalyzes a salvage reaction resulting in the formation of AMP, that is energically less costly than de novo synthesis.</text>
</comment>
<comment type="catalytic activity">
    <reaction evidence="1">
        <text>AMP + diphosphate = 5-phospho-alpha-D-ribose 1-diphosphate + adenine</text>
        <dbReference type="Rhea" id="RHEA:16609"/>
        <dbReference type="ChEBI" id="CHEBI:16708"/>
        <dbReference type="ChEBI" id="CHEBI:33019"/>
        <dbReference type="ChEBI" id="CHEBI:58017"/>
        <dbReference type="ChEBI" id="CHEBI:456215"/>
        <dbReference type="EC" id="2.4.2.7"/>
    </reaction>
</comment>
<comment type="pathway">
    <text evidence="1">Purine metabolism; AMP biosynthesis via salvage pathway; AMP from adenine: step 1/1.</text>
</comment>
<comment type="subunit">
    <text evidence="1">Homodimer.</text>
</comment>
<comment type="subcellular location">
    <subcellularLocation>
        <location evidence="1">Cytoplasm</location>
    </subcellularLocation>
</comment>
<comment type="similarity">
    <text evidence="1">Belongs to the purine/pyrimidine phosphoribosyltransferase family.</text>
</comment>
<dbReference type="EC" id="2.4.2.7" evidence="1"/>
<dbReference type="EMBL" id="CP000822">
    <property type="protein sequence ID" value="ABV13787.1"/>
    <property type="molecule type" value="Genomic_DNA"/>
</dbReference>
<dbReference type="RefSeq" id="WP_012133504.1">
    <property type="nucleotide sequence ID" value="NC_009792.1"/>
</dbReference>
<dbReference type="SMR" id="A8AJX4"/>
<dbReference type="STRING" id="290338.CKO_02680"/>
<dbReference type="GeneID" id="45136539"/>
<dbReference type="KEGG" id="cko:CKO_02680"/>
<dbReference type="HOGENOM" id="CLU_063339_3_0_6"/>
<dbReference type="OrthoDB" id="9803963at2"/>
<dbReference type="UniPathway" id="UPA00588">
    <property type="reaction ID" value="UER00646"/>
</dbReference>
<dbReference type="Proteomes" id="UP000008148">
    <property type="component" value="Chromosome"/>
</dbReference>
<dbReference type="GO" id="GO:0005829">
    <property type="term" value="C:cytosol"/>
    <property type="evidence" value="ECO:0007669"/>
    <property type="project" value="TreeGrafter"/>
</dbReference>
<dbReference type="GO" id="GO:0003999">
    <property type="term" value="F:adenine phosphoribosyltransferase activity"/>
    <property type="evidence" value="ECO:0007669"/>
    <property type="project" value="UniProtKB-UniRule"/>
</dbReference>
<dbReference type="GO" id="GO:0006168">
    <property type="term" value="P:adenine salvage"/>
    <property type="evidence" value="ECO:0007669"/>
    <property type="project" value="InterPro"/>
</dbReference>
<dbReference type="GO" id="GO:0044209">
    <property type="term" value="P:AMP salvage"/>
    <property type="evidence" value="ECO:0007669"/>
    <property type="project" value="UniProtKB-UniRule"/>
</dbReference>
<dbReference type="GO" id="GO:0006166">
    <property type="term" value="P:purine ribonucleoside salvage"/>
    <property type="evidence" value="ECO:0007669"/>
    <property type="project" value="UniProtKB-KW"/>
</dbReference>
<dbReference type="CDD" id="cd06223">
    <property type="entry name" value="PRTases_typeI"/>
    <property type="match status" value="1"/>
</dbReference>
<dbReference type="FunFam" id="3.40.50.2020:FF:000004">
    <property type="entry name" value="Adenine phosphoribosyltransferase"/>
    <property type="match status" value="1"/>
</dbReference>
<dbReference type="Gene3D" id="3.40.50.2020">
    <property type="match status" value="1"/>
</dbReference>
<dbReference type="HAMAP" id="MF_00004">
    <property type="entry name" value="Aden_phosphoribosyltr"/>
    <property type="match status" value="1"/>
</dbReference>
<dbReference type="InterPro" id="IPR005764">
    <property type="entry name" value="Ade_phspho_trans"/>
</dbReference>
<dbReference type="InterPro" id="IPR050120">
    <property type="entry name" value="Adenine_PRTase"/>
</dbReference>
<dbReference type="InterPro" id="IPR000836">
    <property type="entry name" value="PRibTrfase_dom"/>
</dbReference>
<dbReference type="InterPro" id="IPR029057">
    <property type="entry name" value="PRTase-like"/>
</dbReference>
<dbReference type="NCBIfam" id="TIGR01090">
    <property type="entry name" value="apt"/>
    <property type="match status" value="1"/>
</dbReference>
<dbReference type="NCBIfam" id="NF002632">
    <property type="entry name" value="PRK02304.1-1"/>
    <property type="match status" value="1"/>
</dbReference>
<dbReference type="NCBIfam" id="NF002634">
    <property type="entry name" value="PRK02304.1-3"/>
    <property type="match status" value="1"/>
</dbReference>
<dbReference type="NCBIfam" id="NF002636">
    <property type="entry name" value="PRK02304.1-5"/>
    <property type="match status" value="1"/>
</dbReference>
<dbReference type="PANTHER" id="PTHR11776">
    <property type="entry name" value="ADENINE PHOSPHORIBOSYLTRANSFERASE"/>
    <property type="match status" value="1"/>
</dbReference>
<dbReference type="PANTHER" id="PTHR11776:SF7">
    <property type="entry name" value="PHOSPHORIBOSYLTRANSFERASE DOMAIN-CONTAINING PROTEIN"/>
    <property type="match status" value="1"/>
</dbReference>
<dbReference type="Pfam" id="PF00156">
    <property type="entry name" value="Pribosyltran"/>
    <property type="match status" value="1"/>
</dbReference>
<dbReference type="SUPFAM" id="SSF53271">
    <property type="entry name" value="PRTase-like"/>
    <property type="match status" value="1"/>
</dbReference>
<dbReference type="PROSITE" id="PS00103">
    <property type="entry name" value="PUR_PYR_PR_TRANSFER"/>
    <property type="match status" value="1"/>
</dbReference>
<gene>
    <name evidence="1" type="primary">apt</name>
    <name type="ordered locus">CKO_02680</name>
</gene>
<protein>
    <recommendedName>
        <fullName evidence="1">Adenine phosphoribosyltransferase</fullName>
        <shortName evidence="1">APRT</shortName>
        <ecNumber evidence="1">2.4.2.7</ecNumber>
    </recommendedName>
</protein>